<organism>
    <name type="scientific">Bos taurus</name>
    <name type="common">Bovine</name>
    <dbReference type="NCBI Taxonomy" id="9913"/>
    <lineage>
        <taxon>Eukaryota</taxon>
        <taxon>Metazoa</taxon>
        <taxon>Chordata</taxon>
        <taxon>Craniata</taxon>
        <taxon>Vertebrata</taxon>
        <taxon>Euteleostomi</taxon>
        <taxon>Mammalia</taxon>
        <taxon>Eutheria</taxon>
        <taxon>Laurasiatheria</taxon>
        <taxon>Artiodactyla</taxon>
        <taxon>Ruminantia</taxon>
        <taxon>Pecora</taxon>
        <taxon>Bovidae</taxon>
        <taxon>Bovinae</taxon>
        <taxon>Bos</taxon>
    </lineage>
</organism>
<sequence length="196" mass="22200">MGSEQSSEAESRPNDLNSSVTPSPAKHRAKMDDIVVVAQGSQASRNVSNDPDVIKLQEIPTFQPLLKGLLSGQTSPTNAKLEKLDSQQVLQLCLRYQDHLHQCAEAVAFDQNALVKRIKEMDLSVETLFSFMQERQKRYAKYAEQIQKVNEMSAILRRIQMGIDQTVPLLERLNSLLPEAERLEPFSVKPDRELRL</sequence>
<dbReference type="EMBL" id="BC123638">
    <property type="protein sequence ID" value="AAI23639.1"/>
    <property type="molecule type" value="mRNA"/>
</dbReference>
<dbReference type="RefSeq" id="NP_001069823.1">
    <property type="nucleotide sequence ID" value="NM_001076355.1"/>
</dbReference>
<dbReference type="SMR" id="Q08DP2"/>
<dbReference type="FunCoup" id="Q08DP2">
    <property type="interactions" value="2638"/>
</dbReference>
<dbReference type="STRING" id="9913.ENSBTAP00000061699"/>
<dbReference type="PaxDb" id="9913-ENSBTAP00000011832"/>
<dbReference type="Ensembl" id="ENSBTAT00000011832.6">
    <property type="protein sequence ID" value="ENSBTAP00000011832.4"/>
    <property type="gene ID" value="ENSBTAG00000008989.6"/>
</dbReference>
<dbReference type="GeneID" id="614947"/>
<dbReference type="KEGG" id="bta:614947"/>
<dbReference type="CTD" id="118426"/>
<dbReference type="VEuPathDB" id="HostDB:ENSBTAG00000008989"/>
<dbReference type="VGNC" id="VGNC:26542">
    <property type="gene designation" value="BORCS5"/>
</dbReference>
<dbReference type="eggNOG" id="KOG4515">
    <property type="taxonomic scope" value="Eukaryota"/>
</dbReference>
<dbReference type="GeneTree" id="ENSGT00390000015016"/>
<dbReference type="HOGENOM" id="CLU_064176_1_0_1"/>
<dbReference type="InParanoid" id="Q08DP2"/>
<dbReference type="OMA" id="EGRPHDP"/>
<dbReference type="OrthoDB" id="10035640at2759"/>
<dbReference type="TreeFam" id="TF316379"/>
<dbReference type="Proteomes" id="UP000009136">
    <property type="component" value="Chromosome 5"/>
</dbReference>
<dbReference type="Bgee" id="ENSBTAG00000008989">
    <property type="expression patterns" value="Expressed in oocyte and 105 other cell types or tissues"/>
</dbReference>
<dbReference type="GO" id="GO:0099078">
    <property type="term" value="C:BORC complex"/>
    <property type="evidence" value="ECO:0000250"/>
    <property type="project" value="UniProtKB"/>
</dbReference>
<dbReference type="GO" id="GO:0098574">
    <property type="term" value="C:cytoplasmic side of lysosomal membrane"/>
    <property type="evidence" value="ECO:0000250"/>
    <property type="project" value="UniProtKB"/>
</dbReference>
<dbReference type="GO" id="GO:0016020">
    <property type="term" value="C:membrane"/>
    <property type="evidence" value="ECO:0000250"/>
    <property type="project" value="UniProtKB"/>
</dbReference>
<dbReference type="GO" id="GO:0030672">
    <property type="term" value="C:synaptic vesicle membrane"/>
    <property type="evidence" value="ECO:0000318"/>
    <property type="project" value="GO_Central"/>
</dbReference>
<dbReference type="GO" id="GO:0032418">
    <property type="term" value="P:lysosome localization"/>
    <property type="evidence" value="ECO:0000250"/>
    <property type="project" value="UniProtKB"/>
</dbReference>
<dbReference type="GO" id="GO:0072384">
    <property type="term" value="P:organelle transport along microtubule"/>
    <property type="evidence" value="ECO:0000250"/>
    <property type="project" value="UniProtKB"/>
</dbReference>
<dbReference type="GO" id="GO:1903744">
    <property type="term" value="P:positive regulation of anterograde synaptic vesicle transport"/>
    <property type="evidence" value="ECO:0000318"/>
    <property type="project" value="GO_Central"/>
</dbReference>
<dbReference type="CDD" id="cd22789">
    <property type="entry name" value="BORCS5-like"/>
    <property type="match status" value="1"/>
</dbReference>
<dbReference type="InterPro" id="IPR018780">
    <property type="entry name" value="TBORCS5"/>
</dbReference>
<dbReference type="PANTHER" id="PTHR31634">
    <property type="entry name" value="BLOC-1-RELATED COMPLEX SUBUNIT 5"/>
    <property type="match status" value="1"/>
</dbReference>
<dbReference type="PANTHER" id="PTHR31634:SF2">
    <property type="entry name" value="BLOC-1-RELATED COMPLEX SUBUNIT 5"/>
    <property type="match status" value="1"/>
</dbReference>
<dbReference type="Pfam" id="PF10158">
    <property type="entry name" value="LOH1CR12"/>
    <property type="match status" value="1"/>
</dbReference>
<protein>
    <recommendedName>
        <fullName evidence="4">BLOC-1-related complex subunit 5</fullName>
    </recommendedName>
</protein>
<accession>Q08DP2</accession>
<comment type="function">
    <text evidence="1">As part of the BORC complex may play a role in lysosomes movement and localization at the cell periphery. Associated with the cytosolic face of lysosomes, the BORC complex may recruit ARL8B and couple lysosomes to microtubule plus-end-directed kinesin motor. Thereby, it may indirectly play a role in cell spreading and motility.</text>
</comment>
<comment type="subunit">
    <text evidence="1">Component of the BLOC-one-related complex (BORC) which is composed of BLOC1S1, BLOC1S2, BORCS5, BORCS6, BORCS7, BORCS8, KXD1 and SNAPIN. Interacts with ARL8B, KIF5A, KLC1 and PLEKHM2; links the lysosomal BORC complex to the microtubule plus-end-directed kinesin motor.</text>
</comment>
<comment type="subcellular location">
    <subcellularLocation>
        <location evidence="1">Lysosome membrane</location>
        <topology evidence="1">Lipid-anchor</topology>
        <orientation evidence="1">Cytoplasmic side</orientation>
    </subcellularLocation>
</comment>
<comment type="PTM">
    <text evidence="1">Myristoylation at Gly-2 mediates attachment to lysosome membranes.</text>
</comment>
<comment type="similarity">
    <text evidence="4">Belongs to the BORCS5 family.</text>
</comment>
<feature type="initiator methionine" description="Removed" evidence="1">
    <location>
        <position position="1"/>
    </location>
</feature>
<feature type="chain" id="PRO_0000318595" description="BLOC-1-related complex subunit 5">
    <location>
        <begin position="2"/>
        <end position="196"/>
    </location>
</feature>
<feature type="region of interest" description="Disordered" evidence="3">
    <location>
        <begin position="1"/>
        <end position="32"/>
    </location>
</feature>
<feature type="compositionally biased region" description="Polar residues" evidence="3">
    <location>
        <begin position="1"/>
        <end position="22"/>
    </location>
</feature>
<feature type="modified residue" description="Phosphoserine" evidence="2">
    <location>
        <position position="71"/>
    </location>
</feature>
<feature type="modified residue" description="Phosphoserine" evidence="1">
    <location>
        <position position="75"/>
    </location>
</feature>
<feature type="lipid moiety-binding region" description="N-myristoyl glycine" evidence="1">
    <location>
        <position position="2"/>
    </location>
</feature>
<keyword id="KW-0449">Lipoprotein</keyword>
<keyword id="KW-0458">Lysosome</keyword>
<keyword id="KW-0472">Membrane</keyword>
<keyword id="KW-0519">Myristate</keyword>
<keyword id="KW-0597">Phosphoprotein</keyword>
<keyword id="KW-1185">Reference proteome</keyword>
<gene>
    <name evidence="1" type="primary">BORCS5</name>
</gene>
<proteinExistence type="evidence at transcript level"/>
<reference key="1">
    <citation type="submission" date="2006-09" db="EMBL/GenBank/DDBJ databases">
        <authorList>
            <consortium name="NIH - Mammalian Gene Collection (MGC) project"/>
        </authorList>
    </citation>
    <scope>NUCLEOTIDE SEQUENCE [LARGE SCALE MRNA]</scope>
    <source>
        <strain>Hereford</strain>
        <tissue>Fetal muscle</tissue>
    </source>
</reference>
<name>BORC5_BOVIN</name>
<evidence type="ECO:0000250" key="1">
    <source>
        <dbReference type="UniProtKB" id="Q969J3"/>
    </source>
</evidence>
<evidence type="ECO:0000250" key="2">
    <source>
        <dbReference type="UniProtKB" id="Q9D920"/>
    </source>
</evidence>
<evidence type="ECO:0000256" key="3">
    <source>
        <dbReference type="SAM" id="MobiDB-lite"/>
    </source>
</evidence>
<evidence type="ECO:0000305" key="4"/>